<name>LIM1_LILLO</name>
<accession>Q43533</accession>
<dbReference type="EMBL" id="D21807">
    <property type="protein sequence ID" value="BAA04831.1"/>
    <property type="molecule type" value="mRNA"/>
</dbReference>
<dbReference type="PIR" id="PC2136">
    <property type="entry name" value="PC2136"/>
</dbReference>
<dbReference type="SMR" id="Q43533"/>
<dbReference type="GO" id="GO:0005576">
    <property type="term" value="C:extracellular region"/>
    <property type="evidence" value="ECO:0007669"/>
    <property type="project" value="UniProtKB-SubCell"/>
</dbReference>
<dbReference type="Gene3D" id="1.10.110.10">
    <property type="entry name" value="Plant lipid-transfer and hydrophobic proteins"/>
    <property type="match status" value="1"/>
</dbReference>
<dbReference type="InterPro" id="IPR036312">
    <property type="entry name" value="Bifun_inhib/LTP/seed_sf"/>
</dbReference>
<dbReference type="InterPro" id="IPR016140">
    <property type="entry name" value="Bifunc_inhib/LTP/seed_store"/>
</dbReference>
<dbReference type="PANTHER" id="PTHR35501">
    <property type="entry name" value="PROTEIN YY1"/>
    <property type="match status" value="1"/>
</dbReference>
<dbReference type="PANTHER" id="PTHR35501:SF3">
    <property type="entry name" value="PROTEIN YY1"/>
    <property type="match status" value="1"/>
</dbReference>
<dbReference type="Pfam" id="PF00234">
    <property type="entry name" value="Tryp_alpha_amyl"/>
    <property type="match status" value="1"/>
</dbReference>
<dbReference type="PRINTS" id="PR00436">
    <property type="entry name" value="INTERLEUKIN8"/>
</dbReference>
<dbReference type="SMART" id="SM00499">
    <property type="entry name" value="AAI"/>
    <property type="match status" value="1"/>
</dbReference>
<dbReference type="SUPFAM" id="SSF47699">
    <property type="entry name" value="Bifunctional inhibitor/lipid-transfer protein/seed storage 2S albumin"/>
    <property type="match status" value="1"/>
</dbReference>
<feature type="signal peptide" evidence="2">
    <location>
        <begin position="1"/>
        <end position="26"/>
    </location>
</feature>
<feature type="chain" id="PRO_0000000235" description="Protein LIM1">
    <location>
        <begin position="27"/>
        <end position="90"/>
    </location>
</feature>
<feature type="disulfide bond" evidence="1">
    <location>
        <begin position="29"/>
        <end position="66"/>
    </location>
</feature>
<feature type="disulfide bond" evidence="1">
    <location>
        <begin position="39"/>
        <end position="55"/>
    </location>
</feature>
<feature type="disulfide bond" evidence="1">
    <location>
        <begin position="56"/>
        <end position="81"/>
    </location>
</feature>
<feature type="disulfide bond" evidence="1">
    <location>
        <begin position="68"/>
        <end position="88"/>
    </location>
</feature>
<gene>
    <name type="primary">LIM1</name>
</gene>
<reference key="1">
    <citation type="journal article" date="1994" name="DNA Res.">
        <title>Characterization of cDNAs induced in meiotic prophase in lily microsporocytes.</title>
        <authorList>
            <person name="Kobayashi T."/>
            <person name="Kobayashi E."/>
            <person name="Sato S."/>
            <person name="Hotta Y."/>
            <person name="Miyajima N."/>
            <person name="Tanaka A."/>
            <person name="Tabata S."/>
        </authorList>
    </citation>
    <scope>NUCLEOTIDE SEQUENCE [MRNA]</scope>
    <source>
        <strain>cv. Hinomoto</strain>
        <tissue>Flower bud</tissue>
    </source>
</reference>
<evidence type="ECO:0000250" key="1"/>
<evidence type="ECO:0000255" key="2"/>
<evidence type="ECO:0000305" key="3"/>
<sequence>MASMKSLATAILVVLLLAALSREGRSQNCSAAIGELMTCGPYVLPGNNGAPSEQCCSALRAVNHGCLCETINIISSLPDHCSLPAVNCAA</sequence>
<proteinExistence type="inferred from homology"/>
<protein>
    <recommendedName>
        <fullName>Protein LIM1</fullName>
    </recommendedName>
</protein>
<keyword id="KW-1015">Disulfide bond</keyword>
<keyword id="KW-0964">Secreted</keyword>
<keyword id="KW-0732">Signal</keyword>
<comment type="subcellular location">
    <subcellularLocation>
        <location evidence="3">Secreted</location>
    </subcellularLocation>
</comment>
<comment type="similarity">
    <text evidence="3">Belongs to the A9/FIL1 family.</text>
</comment>
<organism>
    <name type="scientific">Lilium longiflorum</name>
    <name type="common">Trumpet lily</name>
    <dbReference type="NCBI Taxonomy" id="4690"/>
    <lineage>
        <taxon>Eukaryota</taxon>
        <taxon>Viridiplantae</taxon>
        <taxon>Streptophyta</taxon>
        <taxon>Embryophyta</taxon>
        <taxon>Tracheophyta</taxon>
        <taxon>Spermatophyta</taxon>
        <taxon>Magnoliopsida</taxon>
        <taxon>Liliopsida</taxon>
        <taxon>Liliales</taxon>
        <taxon>Liliaceae</taxon>
        <taxon>Lilium</taxon>
    </lineage>
</organism>